<proteinExistence type="evidence at protein level"/>
<comment type="function">
    <text evidence="2 7 10 11 13">Accessory subunit of the proton-transporting vacuolar (V)-ATPase protein pump, which is required for luminal acidification of secretory vesicles (PubMed:33065002). Guides the V-type ATPase into specialized subcellular compartments, such as neuroendocrine regulated secretory vesicles or the ruffled border of the osteoclast, thereby regulating its activity (PubMed:27231034). Involved in membrane trafficking and Ca(2+)-dependent membrane fusion (PubMed:27231034). May play a role in the assembly of the V-type ATPase complex (Probable). In aerobic conditions, involved in intracellular iron homeostasis, thus triggering the activity of Fe(2+) prolyl hydroxylase (PHD) enzymes, and leading to HIF1A hydroxylation and subsequent proteasomal degradation (PubMed:28296633). In islets of Langerhans cells, may regulate the acidification of dense-core secretory granules (By similarity).</text>
</comment>
<comment type="subunit">
    <text evidence="5 8 9 10">Accessory component of the multisubunit proton-transporting vacuolar (V)-ATPase protein pump (PubMed:33065002). Interacts (via N-terminus) with ATP6AP2 (via N-terminus) (PubMed:29127204, PubMed:33065002). Interacts with RNASEK (PubMed:26212330). Interacts with TMEM106B (via C-terminus) (PubMed:28728022).</text>
</comment>
<comment type="interaction">
    <interactant intactId="EBI-714667">
        <id>Q15904</id>
    </interactant>
    <interactant intactId="EBI-466029">
        <id>P42858</id>
        <label>HTT</label>
    </interactant>
    <organismsDiffer>false</organismsDiffer>
    <experiments>3</experiments>
</comment>
<comment type="interaction">
    <interactant intactId="EBI-714667">
        <id>Q15904</id>
    </interactant>
    <interactant intactId="EBI-25475868">
        <id>PRO_0000449624</id>
        <label>rep</label>
        <dbReference type="UniProtKB" id="P0DTD1"/>
    </interactant>
    <organismsDiffer>true</organismsDiffer>
    <experiments>12</experiments>
</comment>
<comment type="subcellular location">
    <subcellularLocation>
        <location evidence="6">Endoplasmic reticulum membrane</location>
        <topology evidence="12">Single-pass type I membrane protein</topology>
    </subcellularLocation>
    <subcellularLocation>
        <location evidence="6">Endoplasmic reticulum-Golgi intermediate compartment membrane</location>
    </subcellularLocation>
    <subcellularLocation>
        <location evidence="1">Cytoplasmic vesicle</location>
        <location evidence="1">Secretory vesicle</location>
        <location evidence="1">Synaptic vesicle membrane</location>
        <topology evidence="12">Single-pass type I membrane protein</topology>
    </subcellularLocation>
    <subcellularLocation>
        <location evidence="1">Cytoplasmic vesicle</location>
        <location evidence="1">Clathrin-coated vesicle membrane</location>
        <topology evidence="12">Single-pass type I membrane protein</topology>
    </subcellularLocation>
    <text evidence="6">Not detected in trans-Golgi network.</text>
</comment>
<comment type="tissue specificity">
    <text evidence="6">widely expressed, with highest levels in brain and lowest in liver and duodenum.</text>
</comment>
<comment type="PTM">
    <text evidence="6">N-glycosylated.</text>
</comment>
<comment type="disease" evidence="6">
    <disease id="DI-04743">
        <name>Immunodeficiency 47</name>
        <acronym>IMD47</acronym>
        <description>A complex immunodeficiency syndrome characterized by hypogammaglobulinemia, recurrent bacterial infections, defective glycosylation of serum proteins, and liver disease with neonatal jaundice and hepatosplenomegaly. Some patients may also have neurologic features, including seizures, mild intellectual disability, and behavioral abnormalities. Inheritance is X-linked recessive.</description>
        <dbReference type="MIM" id="300972"/>
    </disease>
    <text>The disease is caused by variants affecting the gene represented in this entry.</text>
</comment>
<comment type="similarity">
    <text evidence="12">Belongs to the vacuolar ATPase subunit S1 family.</text>
</comment>
<comment type="sequence caution" evidence="12">
    <conflict type="erroneous initiation">
        <sequence resource="EMBL-CDS" id="BAA03938"/>
    </conflict>
    <text>Truncated N-terminus.</text>
</comment>
<comment type="sequence caution" evidence="12">
    <conflict type="erroneous initiation">
        <sequence resource="EMBL-CDS" id="CAB66785"/>
    </conflict>
    <text>Truncated N-terminus.</text>
</comment>
<accession>Q15904</accession>
<accession>A6ZKI4</accession>
<accession>Q8NBT4</accession>
<accession>Q9H0C7</accession>
<dbReference type="EMBL" id="L44140">
    <property type="status" value="NOT_ANNOTATED_CDS"/>
    <property type="molecule type" value="Genomic_DNA"/>
</dbReference>
<dbReference type="EMBL" id="AL136851">
    <property type="protein sequence ID" value="CAB66785.1"/>
    <property type="status" value="ALT_INIT"/>
    <property type="molecule type" value="mRNA"/>
</dbReference>
<dbReference type="EMBL" id="AK026519">
    <property type="status" value="NOT_ANNOTATED_CDS"/>
    <property type="molecule type" value="mRNA"/>
</dbReference>
<dbReference type="EMBL" id="AK289452">
    <property type="protein sequence ID" value="BAF82141.1"/>
    <property type="molecule type" value="mRNA"/>
</dbReference>
<dbReference type="EMBL" id="AK075284">
    <property type="protein sequence ID" value="BAC11520.1"/>
    <property type="molecule type" value="mRNA"/>
</dbReference>
<dbReference type="EMBL" id="BX936347">
    <property type="status" value="NOT_ANNOTATED_CDS"/>
    <property type="molecule type" value="Genomic_DNA"/>
</dbReference>
<dbReference type="EMBL" id="BX936385">
    <property type="status" value="NOT_ANNOTATED_CDS"/>
    <property type="molecule type" value="Genomic_DNA"/>
</dbReference>
<dbReference type="EMBL" id="CH471172">
    <property type="protein sequence ID" value="EAW72715.1"/>
    <property type="molecule type" value="Genomic_DNA"/>
</dbReference>
<dbReference type="EMBL" id="BC000724">
    <property type="protein sequence ID" value="AAH00724.1"/>
    <property type="molecule type" value="mRNA"/>
</dbReference>
<dbReference type="EMBL" id="D16469">
    <property type="protein sequence ID" value="BAA03938.1"/>
    <property type="status" value="ALT_INIT"/>
    <property type="molecule type" value="mRNA"/>
</dbReference>
<dbReference type="CCDS" id="CCDS35451.1"/>
<dbReference type="RefSeq" id="NP_001174.2">
    <property type="nucleotide sequence ID" value="NM_001183.5"/>
</dbReference>
<dbReference type="RefSeq" id="XP_011529481.1">
    <property type="nucleotide sequence ID" value="XM_011531179.1"/>
</dbReference>
<dbReference type="PDB" id="6WLW">
    <property type="method" value="EM"/>
    <property type="resolution" value="3.00 A"/>
    <property type="chains" value="U=1-470"/>
</dbReference>
<dbReference type="PDB" id="6WM2">
    <property type="method" value="EM"/>
    <property type="resolution" value="3.10 A"/>
    <property type="chains" value="U=1-470"/>
</dbReference>
<dbReference type="PDB" id="6WM3">
    <property type="method" value="EM"/>
    <property type="resolution" value="3.40 A"/>
    <property type="chains" value="U=1-470"/>
</dbReference>
<dbReference type="PDB" id="6WM4">
    <property type="method" value="EM"/>
    <property type="resolution" value="3.60 A"/>
    <property type="chains" value="U=1-470"/>
</dbReference>
<dbReference type="PDB" id="7U4T">
    <property type="method" value="EM"/>
    <property type="resolution" value="3.60 A"/>
    <property type="chains" value="U=1-470"/>
</dbReference>
<dbReference type="PDB" id="7UNF">
    <property type="method" value="EM"/>
    <property type="resolution" value="4.08 A"/>
    <property type="chains" value="s=1-470"/>
</dbReference>
<dbReference type="PDBsum" id="6WLW"/>
<dbReference type="PDBsum" id="6WM2"/>
<dbReference type="PDBsum" id="6WM3"/>
<dbReference type="PDBsum" id="6WM4"/>
<dbReference type="PDBsum" id="7U4T"/>
<dbReference type="PDBsum" id="7UNF"/>
<dbReference type="EMDB" id="EMD-21844"/>
<dbReference type="EMDB" id="EMD-21847"/>
<dbReference type="EMDB" id="EMD-21848"/>
<dbReference type="EMDB" id="EMD-21849"/>
<dbReference type="EMDB" id="EMD-26334"/>
<dbReference type="EMDB" id="EMD-26623"/>
<dbReference type="SMR" id="Q15904"/>
<dbReference type="BioGRID" id="107019">
    <property type="interactions" value="187"/>
</dbReference>
<dbReference type="ComplexPortal" id="CPX-2470">
    <property type="entry name" value="Vacuolar proton translocating ATPase complex, ATP6V0A1 variant"/>
</dbReference>
<dbReference type="ComplexPortal" id="CPX-6904">
    <property type="entry name" value="Vacuolar proton translocating ATPase complex, ATP6V0A2 variant"/>
</dbReference>
<dbReference type="ComplexPortal" id="CPX-6905">
    <property type="entry name" value="Vacuolar proton translocating ATPase complex, ATP6V0A3 variant"/>
</dbReference>
<dbReference type="ComplexPortal" id="CPX-6912">
    <property type="entry name" value="Vacuolar proton translocating ATPase complex, ATP6V0A4 variant"/>
</dbReference>
<dbReference type="FunCoup" id="Q15904">
    <property type="interactions" value="537"/>
</dbReference>
<dbReference type="IntAct" id="Q15904">
    <property type="interactions" value="77"/>
</dbReference>
<dbReference type="MINT" id="Q15904"/>
<dbReference type="STRING" id="9606.ENSP00000358777"/>
<dbReference type="BindingDB" id="Q15904"/>
<dbReference type="ChEMBL" id="CHEMBL4790"/>
<dbReference type="DrugBank" id="DB01133">
    <property type="generic name" value="Tiludronic acid"/>
</dbReference>
<dbReference type="TCDB" id="8.A.107.1.1">
    <property type="family name" value="the v-type atpase assembly factor, atp6ap1 (atp6ap1) family"/>
</dbReference>
<dbReference type="GlyConnect" id="1900">
    <property type="glycosylation" value="5 N-Linked glycans (2 sites)"/>
</dbReference>
<dbReference type="GlyCosmos" id="Q15904">
    <property type="glycosylation" value="7 sites, 5 glycans"/>
</dbReference>
<dbReference type="GlyGen" id="Q15904">
    <property type="glycosylation" value="12 sites, 51 N-linked glycans (5 sites), 2 O-linked glycans (3 sites)"/>
</dbReference>
<dbReference type="iPTMnet" id="Q15904"/>
<dbReference type="PhosphoSitePlus" id="Q15904"/>
<dbReference type="SwissPalm" id="Q15904"/>
<dbReference type="BioMuta" id="ATP6AP1"/>
<dbReference type="DMDM" id="12230759"/>
<dbReference type="jPOST" id="Q15904"/>
<dbReference type="MassIVE" id="Q15904"/>
<dbReference type="PaxDb" id="9606-ENSP00000358777"/>
<dbReference type="PeptideAtlas" id="Q15904"/>
<dbReference type="ProteomicsDB" id="60806"/>
<dbReference type="Pumba" id="Q15904"/>
<dbReference type="Antibodypedia" id="31229">
    <property type="antibodies" value="217 antibodies from 27 providers"/>
</dbReference>
<dbReference type="DNASU" id="537"/>
<dbReference type="Ensembl" id="ENST00000369762.7">
    <property type="protein sequence ID" value="ENSP00000358777.2"/>
    <property type="gene ID" value="ENSG00000071553.18"/>
</dbReference>
<dbReference type="GeneID" id="537"/>
<dbReference type="KEGG" id="hsa:537"/>
<dbReference type="MANE-Select" id="ENST00000369762.7">
    <property type="protein sequence ID" value="ENSP00000358777.2"/>
    <property type="RefSeq nucleotide sequence ID" value="NM_001183.6"/>
    <property type="RefSeq protein sequence ID" value="NP_001174.2"/>
</dbReference>
<dbReference type="UCSC" id="uc004flf.3">
    <property type="organism name" value="human"/>
</dbReference>
<dbReference type="AGR" id="HGNC:868"/>
<dbReference type="CTD" id="537"/>
<dbReference type="DisGeNET" id="537"/>
<dbReference type="GeneCards" id="ATP6AP1"/>
<dbReference type="HGNC" id="HGNC:868">
    <property type="gene designation" value="ATP6AP1"/>
</dbReference>
<dbReference type="HPA" id="ENSG00000071553">
    <property type="expression patterns" value="Low tissue specificity"/>
</dbReference>
<dbReference type="MalaCards" id="ATP6AP1"/>
<dbReference type="MIM" id="300197">
    <property type="type" value="gene"/>
</dbReference>
<dbReference type="MIM" id="300972">
    <property type="type" value="phenotype"/>
</dbReference>
<dbReference type="neXtProt" id="NX_Q15904"/>
<dbReference type="OpenTargets" id="ENSG00000071553"/>
<dbReference type="PharmGKB" id="PA25145"/>
<dbReference type="VEuPathDB" id="HostDB:ENSG00000071553"/>
<dbReference type="eggNOG" id="KOG3868">
    <property type="taxonomic scope" value="Eukaryota"/>
</dbReference>
<dbReference type="GeneTree" id="ENSGT00940000156650"/>
<dbReference type="HOGENOM" id="CLU_039408_1_0_1"/>
<dbReference type="InParanoid" id="Q15904"/>
<dbReference type="OMA" id="WFTMEHL"/>
<dbReference type="OrthoDB" id="9985059at2759"/>
<dbReference type="PAN-GO" id="Q15904">
    <property type="GO annotations" value="2 GO annotations based on evolutionary models"/>
</dbReference>
<dbReference type="PhylomeDB" id="Q15904"/>
<dbReference type="TreeFam" id="TF325819"/>
<dbReference type="BioCyc" id="MetaCyc:HS01034-MONOMER"/>
<dbReference type="PathwayCommons" id="Q15904"/>
<dbReference type="Reactome" id="R-HSA-77387">
    <property type="pathway name" value="Insulin receptor recycling"/>
</dbReference>
<dbReference type="Reactome" id="R-HSA-8980692">
    <property type="pathway name" value="RHOA GTPase cycle"/>
</dbReference>
<dbReference type="Reactome" id="R-HSA-917977">
    <property type="pathway name" value="Transferrin endocytosis and recycling"/>
</dbReference>
<dbReference type="Reactome" id="R-HSA-983712">
    <property type="pathway name" value="Ion channel transport"/>
</dbReference>
<dbReference type="SignaLink" id="Q15904"/>
<dbReference type="SIGNOR" id="Q15904"/>
<dbReference type="BioGRID-ORCS" id="537">
    <property type="hits" value="322 hits in 810 CRISPR screens"/>
</dbReference>
<dbReference type="ChiTaRS" id="ATP6AP1">
    <property type="organism name" value="human"/>
</dbReference>
<dbReference type="GeneWiki" id="ATP6AP1"/>
<dbReference type="GenomeRNAi" id="537"/>
<dbReference type="Pharos" id="Q15904">
    <property type="development level" value="Tchem"/>
</dbReference>
<dbReference type="PRO" id="PR:Q15904"/>
<dbReference type="Proteomes" id="UP000005640">
    <property type="component" value="Chromosome X"/>
</dbReference>
<dbReference type="RNAct" id="Q15904">
    <property type="molecule type" value="protein"/>
</dbReference>
<dbReference type="Bgee" id="ENSG00000071553">
    <property type="expression patterns" value="Expressed in endometrium epithelium and 204 other cell types or tissues"/>
</dbReference>
<dbReference type="ExpressionAtlas" id="Q15904">
    <property type="expression patterns" value="baseline and differential"/>
</dbReference>
<dbReference type="GO" id="GO:0030665">
    <property type="term" value="C:clathrin-coated vesicle membrane"/>
    <property type="evidence" value="ECO:0007669"/>
    <property type="project" value="UniProtKB-SubCell"/>
</dbReference>
<dbReference type="GO" id="GO:0005789">
    <property type="term" value="C:endoplasmic reticulum membrane"/>
    <property type="evidence" value="ECO:0007669"/>
    <property type="project" value="UniProtKB-SubCell"/>
</dbReference>
<dbReference type="GO" id="GO:0033116">
    <property type="term" value="C:endoplasmic reticulum-Golgi intermediate compartment membrane"/>
    <property type="evidence" value="ECO:0007669"/>
    <property type="project" value="UniProtKB-SubCell"/>
</dbReference>
<dbReference type="GO" id="GO:0010008">
    <property type="term" value="C:endosome membrane"/>
    <property type="evidence" value="ECO:0000304"/>
    <property type="project" value="Reactome"/>
</dbReference>
<dbReference type="GO" id="GO:0070062">
    <property type="term" value="C:extracellular exosome"/>
    <property type="evidence" value="ECO:0007005"/>
    <property type="project" value="UniProtKB"/>
</dbReference>
<dbReference type="GO" id="GO:0000139">
    <property type="term" value="C:Golgi membrane"/>
    <property type="evidence" value="ECO:0000303"/>
    <property type="project" value="ComplexPortal"/>
</dbReference>
<dbReference type="GO" id="GO:0005765">
    <property type="term" value="C:lysosomal membrane"/>
    <property type="evidence" value="ECO:0000303"/>
    <property type="project" value="ComplexPortal"/>
</dbReference>
<dbReference type="GO" id="GO:0016020">
    <property type="term" value="C:membrane"/>
    <property type="evidence" value="ECO:0000314"/>
    <property type="project" value="ComplexPortal"/>
</dbReference>
<dbReference type="GO" id="GO:0005886">
    <property type="term" value="C:plasma membrane"/>
    <property type="evidence" value="ECO:0000303"/>
    <property type="project" value="ComplexPortal"/>
</dbReference>
<dbReference type="GO" id="GO:0016469">
    <property type="term" value="C:proton-transporting two-sector ATPase complex"/>
    <property type="evidence" value="ECO:0000304"/>
    <property type="project" value="ProtInc"/>
</dbReference>
<dbReference type="GO" id="GO:0033176">
    <property type="term" value="C:proton-transporting V-type ATPase complex"/>
    <property type="evidence" value="ECO:0000318"/>
    <property type="project" value="GO_Central"/>
</dbReference>
<dbReference type="GO" id="GO:0030672">
    <property type="term" value="C:synaptic vesicle membrane"/>
    <property type="evidence" value="ECO:0007669"/>
    <property type="project" value="UniProtKB-SubCell"/>
</dbReference>
<dbReference type="GO" id="GO:0001671">
    <property type="term" value="F:ATPase activator activity"/>
    <property type="evidence" value="ECO:0000318"/>
    <property type="project" value="GO_Central"/>
</dbReference>
<dbReference type="GO" id="GO:0031267">
    <property type="term" value="F:small GTPase binding"/>
    <property type="evidence" value="ECO:0000250"/>
    <property type="project" value="UniProtKB"/>
</dbReference>
<dbReference type="GO" id="GO:0141109">
    <property type="term" value="F:transporter activator activity"/>
    <property type="evidence" value="ECO:0007669"/>
    <property type="project" value="Ensembl"/>
</dbReference>
<dbReference type="GO" id="GO:0036295">
    <property type="term" value="P:cellular response to increased oxygen levels"/>
    <property type="evidence" value="ECO:0000315"/>
    <property type="project" value="UniProtKB"/>
</dbReference>
<dbReference type="GO" id="GO:0048388">
    <property type="term" value="P:endosomal lumen acidification"/>
    <property type="evidence" value="ECO:0000303"/>
    <property type="project" value="ComplexPortal"/>
</dbReference>
<dbReference type="GO" id="GO:0099638">
    <property type="term" value="P:endosome to plasma membrane protein transport"/>
    <property type="evidence" value="ECO:0000250"/>
    <property type="project" value="UniProtKB"/>
</dbReference>
<dbReference type="GO" id="GO:0061795">
    <property type="term" value="P:Golgi lumen acidification"/>
    <property type="evidence" value="ECO:0000303"/>
    <property type="project" value="ComplexPortal"/>
</dbReference>
<dbReference type="GO" id="GO:0006879">
    <property type="term" value="P:intracellular iron ion homeostasis"/>
    <property type="evidence" value="ECO:0000315"/>
    <property type="project" value="UniProtKB"/>
</dbReference>
<dbReference type="GO" id="GO:0051452">
    <property type="term" value="P:intracellular pH reduction"/>
    <property type="evidence" value="ECO:0000303"/>
    <property type="project" value="ComplexPortal"/>
</dbReference>
<dbReference type="GO" id="GO:0007042">
    <property type="term" value="P:lysosomal lumen acidification"/>
    <property type="evidence" value="ECO:0000303"/>
    <property type="project" value="ComplexPortal"/>
</dbReference>
<dbReference type="GO" id="GO:0036035">
    <property type="term" value="P:osteoclast development"/>
    <property type="evidence" value="ECO:0000250"/>
    <property type="project" value="CAFA"/>
</dbReference>
<dbReference type="GO" id="GO:1902600">
    <property type="term" value="P:proton transmembrane transport"/>
    <property type="evidence" value="ECO:0000303"/>
    <property type="project" value="ComplexPortal"/>
</dbReference>
<dbReference type="GO" id="GO:0030641">
    <property type="term" value="P:regulation of cellular pH"/>
    <property type="evidence" value="ECO:0000318"/>
    <property type="project" value="GO_Central"/>
</dbReference>
<dbReference type="GO" id="GO:0097401">
    <property type="term" value="P:synaptic vesicle lumen acidification"/>
    <property type="evidence" value="ECO:0007669"/>
    <property type="project" value="Ensembl"/>
</dbReference>
<dbReference type="GO" id="GO:0007035">
    <property type="term" value="P:vacuolar acidification"/>
    <property type="evidence" value="ECO:0000303"/>
    <property type="project" value="ComplexPortal"/>
</dbReference>
<dbReference type="FunFam" id="2.40.160.110:FF:000003">
    <property type="entry name" value="ATPase H+ transporting accessory protein 1"/>
    <property type="match status" value="1"/>
</dbReference>
<dbReference type="Gene3D" id="2.40.160.110">
    <property type="match status" value="1"/>
</dbReference>
<dbReference type="InterPro" id="IPR008388">
    <property type="entry name" value="Ac45_acc_su"/>
</dbReference>
<dbReference type="InterPro" id="IPR046756">
    <property type="entry name" value="VAS1/VOA1_TM"/>
</dbReference>
<dbReference type="InterPro" id="IPR046755">
    <property type="entry name" value="VAS1_LD"/>
</dbReference>
<dbReference type="PANTHER" id="PTHR12471:SF2">
    <property type="entry name" value="V-TYPE PROTON ATPASE SUBUNIT S1"/>
    <property type="match status" value="1"/>
</dbReference>
<dbReference type="PANTHER" id="PTHR12471">
    <property type="entry name" value="VACUOLAR ATP SYNTHASE SUBUNIT S1"/>
    <property type="match status" value="1"/>
</dbReference>
<dbReference type="Pfam" id="PF20520">
    <property type="entry name" value="Ac45-VOA1_TM"/>
    <property type="match status" value="1"/>
</dbReference>
<dbReference type="Pfam" id="PF05827">
    <property type="entry name" value="VAS1_LD"/>
    <property type="match status" value="1"/>
</dbReference>
<keyword id="KW-0002">3D-structure</keyword>
<keyword id="KW-0900">Congenital disorder of glycosylation</keyword>
<keyword id="KW-0968">Cytoplasmic vesicle</keyword>
<keyword id="KW-0225">Disease variant</keyword>
<keyword id="KW-1015">Disulfide bond</keyword>
<keyword id="KW-0256">Endoplasmic reticulum</keyword>
<keyword id="KW-0325">Glycoprotein</keyword>
<keyword id="KW-0375">Hydrogen ion transport</keyword>
<keyword id="KW-0406">Ion transport</keyword>
<keyword id="KW-0472">Membrane</keyword>
<keyword id="KW-0597">Phosphoprotein</keyword>
<keyword id="KW-1267">Proteomics identification</keyword>
<keyword id="KW-1185">Reference proteome</keyword>
<keyword id="KW-0732">Signal</keyword>
<keyword id="KW-0770">Synapse</keyword>
<keyword id="KW-0812">Transmembrane</keyword>
<keyword id="KW-1133">Transmembrane helix</keyword>
<keyword id="KW-0813">Transport</keyword>
<feature type="signal peptide" evidence="3">
    <location>
        <begin position="1"/>
        <end position="41"/>
    </location>
</feature>
<feature type="chain" id="PRO_0000002543" description="V-type proton ATPase subunit S1">
    <location>
        <begin position="42"/>
        <end position="470"/>
    </location>
</feature>
<feature type="propeptide" id="PRO_0000454041" evidence="2">
    <location>
        <begin position="42"/>
        <end position="231"/>
    </location>
</feature>
<feature type="topological domain" description="Lumenal" evidence="3">
    <location>
        <begin position="42"/>
        <end position="419"/>
    </location>
</feature>
<feature type="transmembrane region" description="Helical" evidence="3">
    <location>
        <begin position="420"/>
        <end position="440"/>
    </location>
</feature>
<feature type="topological domain" description="Cytoplasmic" evidence="3">
    <location>
        <begin position="441"/>
        <end position="470"/>
    </location>
</feature>
<feature type="site" description="Cleavage; by furin" evidence="2">
    <location>
        <begin position="231"/>
        <end position="232"/>
    </location>
</feature>
<feature type="modified residue" description="Phosphoserine" evidence="18">
    <location>
        <position position="465"/>
    </location>
</feature>
<feature type="glycosylation site" description="N-linked (GlcNAc...) asparagine" evidence="3">
    <location>
        <position position="170"/>
    </location>
</feature>
<feature type="glycosylation site" description="N-linked (GlcNAc...) asparagine" evidence="4 10 14 15 16 17">
    <location>
        <position position="261"/>
    </location>
</feature>
<feature type="glycosylation site" description="N-linked (GlcNAc...) asparagine" evidence="4 10 14 15 16 17">
    <location>
        <position position="273"/>
    </location>
</feature>
<feature type="glycosylation site" description="N-linked (GlcNAc...) asparagine" evidence="3 10 16 17">
    <location>
        <position position="296"/>
    </location>
</feature>
<feature type="glycosylation site" description="N-linked (GlcNAc...) asparagine" evidence="10 14 15 16 17">
    <location>
        <position position="303"/>
    </location>
</feature>
<feature type="glycosylation site" description="N-linked (GlcNAc...) asparagine" evidence="10 14 15 16 17">
    <location>
        <position position="350"/>
    </location>
</feature>
<feature type="glycosylation site" description="N-linked (GlcNAc...) asparagine" evidence="10 16 17">
    <location>
        <position position="357"/>
    </location>
</feature>
<feature type="disulfide bond" evidence="10 14 15 16 17">
    <location>
        <begin position="371"/>
        <end position="418"/>
    </location>
</feature>
<feature type="sequence variant" id="VAR_077021" description="In IMD47; dbSNP:rs878853276." evidence="6">
    <original>L</original>
    <variation>P</variation>
    <location>
        <position position="144"/>
    </location>
</feature>
<feature type="sequence variant" id="VAR_077022" description="In IMD47; probable loss of proton-transporting V-type ATPase complex assembly in yeast; unable to restore V-ATPase-dependent growth in Voa1 mutant yeast; dbSNP:rs878853278." evidence="6">
    <original>Y</original>
    <variation>C</variation>
    <location>
        <position position="313"/>
    </location>
</feature>
<feature type="sequence variant" id="VAR_077023" description="In IMD47; probable loss of proton-transporting V-type ATPase complex assembly in yeast; unable to restore V-ATPase-dependent growth in Voa1 mutant yeast; dbSNP:rs878853277." evidence="6">
    <original>E</original>
    <variation>K</variation>
    <location>
        <position position="346"/>
    </location>
</feature>
<feature type="sequence variant" id="VAR_077024" description="In IMD47; restores V-ATPase-dependent growth in Voa1 mutant yeast; dbSNP:rs878853275." evidence="6">
    <original>M</original>
    <variation>I</variation>
    <location>
        <position position="428"/>
    </location>
</feature>
<feature type="mutagenesis site" description="Retained in the endoplasmic reticulum when transfected into yeast cells. Restores V-ATPase-dependent growth in Voa1 mutant yeast." evidence="6">
    <original>V</original>
    <variation>VKKNN</variation>
    <location>
        <position position="470"/>
    </location>
</feature>
<feature type="sequence conflict" description="In Ref. 4; BAC11520." evidence="12" ref="4">
    <original>I</original>
    <variation>V</variation>
    <location>
        <position position="68"/>
    </location>
</feature>
<feature type="sequence conflict" description="In Ref. 4; BAC11520." evidence="12" ref="4">
    <original>L</original>
    <variation>P</variation>
    <location>
        <position position="74"/>
    </location>
</feature>
<feature type="sequence conflict" description="In Ref. 3; AK026519." evidence="12" ref="3">
    <original>V</original>
    <variation>A</variation>
    <location>
        <position position="229"/>
    </location>
</feature>
<feature type="sequence conflict" description="In Ref. 3; AK026519." evidence="12" ref="3">
    <original>A</original>
    <variation>T</variation>
    <location>
        <position position="307"/>
    </location>
</feature>
<feature type="sequence conflict" description="In Ref. 3; AK026519." evidence="12" ref="3">
    <original>S</original>
    <variation>F</variation>
    <location>
        <position position="335"/>
    </location>
</feature>
<feature type="strand" evidence="19">
    <location>
        <begin position="258"/>
        <end position="270"/>
    </location>
</feature>
<feature type="strand" evidence="19">
    <location>
        <begin position="272"/>
        <end position="280"/>
    </location>
</feature>
<feature type="strand" evidence="19">
    <location>
        <begin position="282"/>
        <end position="284"/>
    </location>
</feature>
<feature type="helix" evidence="19">
    <location>
        <begin position="286"/>
        <end position="289"/>
    </location>
</feature>
<feature type="strand" evidence="19">
    <location>
        <begin position="304"/>
        <end position="316"/>
    </location>
</feature>
<feature type="strand" evidence="19">
    <location>
        <begin position="319"/>
        <end position="332"/>
    </location>
</feature>
<feature type="turn" evidence="19">
    <location>
        <begin position="333"/>
        <end position="336"/>
    </location>
</feature>
<feature type="strand" evidence="19">
    <location>
        <begin position="337"/>
        <end position="348"/>
    </location>
</feature>
<feature type="strand" evidence="19">
    <location>
        <begin position="353"/>
        <end position="357"/>
    </location>
</feature>
<feature type="strand" evidence="19">
    <location>
        <begin position="365"/>
        <end position="376"/>
    </location>
</feature>
<feature type="turn" evidence="19">
    <location>
        <begin position="378"/>
        <end position="381"/>
    </location>
</feature>
<feature type="strand" evidence="19">
    <location>
        <begin position="385"/>
        <end position="390"/>
    </location>
</feature>
<feature type="strand" evidence="19">
    <location>
        <begin position="392"/>
        <end position="403"/>
    </location>
</feature>
<feature type="strand" evidence="19">
    <location>
        <begin position="409"/>
        <end position="411"/>
    </location>
</feature>
<feature type="strand" evidence="19">
    <location>
        <begin position="415"/>
        <end position="418"/>
    </location>
</feature>
<feature type="helix" evidence="19">
    <location>
        <begin position="424"/>
        <end position="448"/>
    </location>
</feature>
<gene>
    <name type="primary">ATP6AP1</name>
    <name type="synonym">ATP6IP1</name>
    <name type="synonym">ATP6S1</name>
    <name type="synonym">VATPS1</name>
    <name type="synonym">XAP3</name>
</gene>
<protein>
    <recommendedName>
        <fullName>V-type proton ATPase subunit S1</fullName>
        <shortName>V-ATPase subunit S1</shortName>
    </recommendedName>
    <alternativeName>
        <fullName>Protein XAP-3</fullName>
    </alternativeName>
    <alternativeName>
        <fullName>V-ATPase Ac45 subunit</fullName>
    </alternativeName>
    <alternativeName>
        <fullName>V-ATPase S1 accessory protein</fullName>
    </alternativeName>
    <alternativeName>
        <fullName>Vacuolar proton pump subunit S1</fullName>
    </alternativeName>
</protein>
<organism>
    <name type="scientific">Homo sapiens</name>
    <name type="common">Human</name>
    <dbReference type="NCBI Taxonomy" id="9606"/>
    <lineage>
        <taxon>Eukaryota</taxon>
        <taxon>Metazoa</taxon>
        <taxon>Chordata</taxon>
        <taxon>Craniata</taxon>
        <taxon>Vertebrata</taxon>
        <taxon>Euteleostomi</taxon>
        <taxon>Mammalia</taxon>
        <taxon>Eutheria</taxon>
        <taxon>Euarchontoglires</taxon>
        <taxon>Primates</taxon>
        <taxon>Haplorrhini</taxon>
        <taxon>Catarrhini</taxon>
        <taxon>Hominidae</taxon>
        <taxon>Homo</taxon>
    </lineage>
</organism>
<sequence>MMAAMATARVRMGPRCAQALWRMPWLPVFLSLAAAAAAAAAEQQVPLVLWSSDRDLWAPAADTHEGHITSDLQLSTYLDPALELGPRNVLLFLQDKLSIEDFTAYGGVFGNKQDSAFSNLENALDLAPSSLVLPAVDWYAVSTLTTYLQEKLGASPLHVDLATLRELKLNASLPALLLIRLPYTASSGLMAPREVLTGNDEVIGQVLSTLKSEDVPYTAALTAVRPSRVARDVAVVAGGLGRQLLQKQPVSPVIHPPVSYNDTAPRILFWAQNFSVAYKDQWEDLTPLTFGVQELNLTGSFWNDSFARLSLTYERLFGTTVTFKFILANRLYPVSARHWFTMERLEVHSNGSVAYFNASQVTGPSIYSFHCEYVSSLSKKGSLLVARTQPSPWQMMLQDFQIQAFNVMGEQFSYASDCASFFSPGIWMGLLTSLFMLFIFTYGLHMILSLKTMDRFDDHKGPTISLTQIV</sequence>
<reference key="1">
    <citation type="journal article" date="1996" name="Hum. Mol. Genet.">
        <title>Long-range sequence analysis in Xq28: thirteen known and six candidate genes in 219.4 kb of high GC DNA between the RCP/GCP and G6PD loci.</title>
        <authorList>
            <person name="Chen E.Y."/>
            <person name="Zollo M."/>
            <person name="Mazzarella R.A."/>
            <person name="Ciccodicola A."/>
            <person name="Chen C.-N."/>
            <person name="Zuo L."/>
            <person name="Heiner C."/>
            <person name="Burough F.W."/>
            <person name="Ripetto M."/>
            <person name="Schlessinger D."/>
            <person name="D'Urso M."/>
        </authorList>
    </citation>
    <scope>NUCLEOTIDE SEQUENCE [GENOMIC DNA / MRNA]</scope>
</reference>
<reference key="2">
    <citation type="journal article" date="2001" name="Genome Res.">
        <title>Towards a catalog of human genes and proteins: sequencing and analysis of 500 novel complete protein coding human cDNAs.</title>
        <authorList>
            <person name="Wiemann S."/>
            <person name="Weil B."/>
            <person name="Wellenreuther R."/>
            <person name="Gassenhuber J."/>
            <person name="Glassl S."/>
            <person name="Ansorge W."/>
            <person name="Boecher M."/>
            <person name="Bloecker H."/>
            <person name="Bauersachs S."/>
            <person name="Blum H."/>
            <person name="Lauber J."/>
            <person name="Duesterhoeft A."/>
            <person name="Beyer A."/>
            <person name="Koehrer K."/>
            <person name="Strack N."/>
            <person name="Mewes H.-W."/>
            <person name="Ottenwaelder B."/>
            <person name="Obermaier B."/>
            <person name="Tampe J."/>
            <person name="Heubner D."/>
            <person name="Wambutt R."/>
            <person name="Korn B."/>
            <person name="Klein M."/>
            <person name="Poustka A."/>
        </authorList>
    </citation>
    <scope>NUCLEOTIDE SEQUENCE [LARGE SCALE MRNA]</scope>
    <source>
        <tissue>Testis</tissue>
    </source>
</reference>
<reference key="3">
    <citation type="journal article" date="2004" name="Nat. Genet.">
        <title>Complete sequencing and characterization of 21,243 full-length human cDNAs.</title>
        <authorList>
            <person name="Ota T."/>
            <person name="Suzuki Y."/>
            <person name="Nishikawa T."/>
            <person name="Otsuki T."/>
            <person name="Sugiyama T."/>
            <person name="Irie R."/>
            <person name="Wakamatsu A."/>
            <person name="Hayashi K."/>
            <person name="Sato H."/>
            <person name="Nagai K."/>
            <person name="Kimura K."/>
            <person name="Makita H."/>
            <person name="Sekine M."/>
            <person name="Obayashi M."/>
            <person name="Nishi T."/>
            <person name="Shibahara T."/>
            <person name="Tanaka T."/>
            <person name="Ishii S."/>
            <person name="Yamamoto J."/>
            <person name="Saito K."/>
            <person name="Kawai Y."/>
            <person name="Isono Y."/>
            <person name="Nakamura Y."/>
            <person name="Nagahari K."/>
            <person name="Murakami K."/>
            <person name="Yasuda T."/>
            <person name="Iwayanagi T."/>
            <person name="Wagatsuma M."/>
            <person name="Shiratori A."/>
            <person name="Sudo H."/>
            <person name="Hosoiri T."/>
            <person name="Kaku Y."/>
            <person name="Kodaira H."/>
            <person name="Kondo H."/>
            <person name="Sugawara M."/>
            <person name="Takahashi M."/>
            <person name="Kanda K."/>
            <person name="Yokoi T."/>
            <person name="Furuya T."/>
            <person name="Kikkawa E."/>
            <person name="Omura Y."/>
            <person name="Abe K."/>
            <person name="Kamihara K."/>
            <person name="Katsuta N."/>
            <person name="Sato K."/>
            <person name="Tanikawa M."/>
            <person name="Yamazaki M."/>
            <person name="Ninomiya K."/>
            <person name="Ishibashi T."/>
            <person name="Yamashita H."/>
            <person name="Murakawa K."/>
            <person name="Fujimori K."/>
            <person name="Tanai H."/>
            <person name="Kimata M."/>
            <person name="Watanabe M."/>
            <person name="Hiraoka S."/>
            <person name="Chiba Y."/>
            <person name="Ishida S."/>
            <person name="Ono Y."/>
            <person name="Takiguchi S."/>
            <person name="Watanabe S."/>
            <person name="Yosida M."/>
            <person name="Hotuta T."/>
            <person name="Kusano J."/>
            <person name="Kanehori K."/>
            <person name="Takahashi-Fujii A."/>
            <person name="Hara H."/>
            <person name="Tanase T.-O."/>
            <person name="Nomura Y."/>
            <person name="Togiya S."/>
            <person name="Komai F."/>
            <person name="Hara R."/>
            <person name="Takeuchi K."/>
            <person name="Arita M."/>
            <person name="Imose N."/>
            <person name="Musashino K."/>
            <person name="Yuuki H."/>
            <person name="Oshima A."/>
            <person name="Sasaki N."/>
            <person name="Aotsuka S."/>
            <person name="Yoshikawa Y."/>
            <person name="Matsunawa H."/>
            <person name="Ichihara T."/>
            <person name="Shiohata N."/>
            <person name="Sano S."/>
            <person name="Moriya S."/>
            <person name="Momiyama H."/>
            <person name="Satoh N."/>
            <person name="Takami S."/>
            <person name="Terashima Y."/>
            <person name="Suzuki O."/>
            <person name="Nakagawa S."/>
            <person name="Senoh A."/>
            <person name="Mizoguchi H."/>
            <person name="Goto Y."/>
            <person name="Shimizu F."/>
            <person name="Wakebe H."/>
            <person name="Hishigaki H."/>
            <person name="Watanabe T."/>
            <person name="Sugiyama A."/>
            <person name="Takemoto M."/>
            <person name="Kawakami B."/>
            <person name="Yamazaki M."/>
            <person name="Watanabe K."/>
            <person name="Kumagai A."/>
            <person name="Itakura S."/>
            <person name="Fukuzumi Y."/>
            <person name="Fujimori Y."/>
            <person name="Komiyama M."/>
            <person name="Tashiro H."/>
            <person name="Tanigami A."/>
            <person name="Fujiwara T."/>
            <person name="Ono T."/>
            <person name="Yamada K."/>
            <person name="Fujii Y."/>
            <person name="Ozaki K."/>
            <person name="Hirao M."/>
            <person name="Ohmori Y."/>
            <person name="Kawabata A."/>
            <person name="Hikiji T."/>
            <person name="Kobatake N."/>
            <person name="Inagaki H."/>
            <person name="Ikema Y."/>
            <person name="Okamoto S."/>
            <person name="Okitani R."/>
            <person name="Kawakami T."/>
            <person name="Noguchi S."/>
            <person name="Itoh T."/>
            <person name="Shigeta K."/>
            <person name="Senba T."/>
            <person name="Matsumura K."/>
            <person name="Nakajima Y."/>
            <person name="Mizuno T."/>
            <person name="Morinaga M."/>
            <person name="Sasaki M."/>
            <person name="Togashi T."/>
            <person name="Oyama M."/>
            <person name="Hata H."/>
            <person name="Watanabe M."/>
            <person name="Komatsu T."/>
            <person name="Mizushima-Sugano J."/>
            <person name="Satoh T."/>
            <person name="Shirai Y."/>
            <person name="Takahashi Y."/>
            <person name="Nakagawa K."/>
            <person name="Okumura K."/>
            <person name="Nagase T."/>
            <person name="Nomura N."/>
            <person name="Kikuchi H."/>
            <person name="Masuho Y."/>
            <person name="Yamashita R."/>
            <person name="Nakai K."/>
            <person name="Yada T."/>
            <person name="Nakamura Y."/>
            <person name="Ohara O."/>
            <person name="Isogai T."/>
            <person name="Sugano S."/>
        </authorList>
    </citation>
    <scope>NUCLEOTIDE SEQUENCE [LARGE SCALE MRNA]</scope>
</reference>
<reference key="4">
    <citation type="journal article" date="2005" name="DNA Res.">
        <title>Signal sequence and keyword trap in silico for selection of full-length human cDNAs encoding secretion or membrane proteins from oligo-capped cDNA libraries.</title>
        <authorList>
            <person name="Otsuki T."/>
            <person name="Ota T."/>
            <person name="Nishikawa T."/>
            <person name="Hayashi K."/>
            <person name="Suzuki Y."/>
            <person name="Yamamoto J."/>
            <person name="Wakamatsu A."/>
            <person name="Kimura K."/>
            <person name="Sakamoto K."/>
            <person name="Hatano N."/>
            <person name="Kawai Y."/>
            <person name="Ishii S."/>
            <person name="Saito K."/>
            <person name="Kojima S."/>
            <person name="Sugiyama T."/>
            <person name="Ono T."/>
            <person name="Okano K."/>
            <person name="Yoshikawa Y."/>
            <person name="Aotsuka S."/>
            <person name="Sasaki N."/>
            <person name="Hattori A."/>
            <person name="Okumura K."/>
            <person name="Nagai K."/>
            <person name="Sugano S."/>
            <person name="Isogai T."/>
        </authorList>
    </citation>
    <scope>NUCLEOTIDE SEQUENCE [LARGE SCALE MRNA]</scope>
</reference>
<reference key="5">
    <citation type="journal article" date="2005" name="Nature">
        <title>The DNA sequence of the human X chromosome.</title>
        <authorList>
            <person name="Ross M.T."/>
            <person name="Grafham D.V."/>
            <person name="Coffey A.J."/>
            <person name="Scherer S."/>
            <person name="McLay K."/>
            <person name="Muzny D."/>
            <person name="Platzer M."/>
            <person name="Howell G.R."/>
            <person name="Burrows C."/>
            <person name="Bird C.P."/>
            <person name="Frankish A."/>
            <person name="Lovell F.L."/>
            <person name="Howe K.L."/>
            <person name="Ashurst J.L."/>
            <person name="Fulton R.S."/>
            <person name="Sudbrak R."/>
            <person name="Wen G."/>
            <person name="Jones M.C."/>
            <person name="Hurles M.E."/>
            <person name="Andrews T.D."/>
            <person name="Scott C.E."/>
            <person name="Searle S."/>
            <person name="Ramser J."/>
            <person name="Whittaker A."/>
            <person name="Deadman R."/>
            <person name="Carter N.P."/>
            <person name="Hunt S.E."/>
            <person name="Chen R."/>
            <person name="Cree A."/>
            <person name="Gunaratne P."/>
            <person name="Havlak P."/>
            <person name="Hodgson A."/>
            <person name="Metzker M.L."/>
            <person name="Richards S."/>
            <person name="Scott G."/>
            <person name="Steffen D."/>
            <person name="Sodergren E."/>
            <person name="Wheeler D.A."/>
            <person name="Worley K.C."/>
            <person name="Ainscough R."/>
            <person name="Ambrose K.D."/>
            <person name="Ansari-Lari M.A."/>
            <person name="Aradhya S."/>
            <person name="Ashwell R.I."/>
            <person name="Babbage A.K."/>
            <person name="Bagguley C.L."/>
            <person name="Ballabio A."/>
            <person name="Banerjee R."/>
            <person name="Barker G.E."/>
            <person name="Barlow K.F."/>
            <person name="Barrett I.P."/>
            <person name="Bates K.N."/>
            <person name="Beare D.M."/>
            <person name="Beasley H."/>
            <person name="Beasley O."/>
            <person name="Beck A."/>
            <person name="Bethel G."/>
            <person name="Blechschmidt K."/>
            <person name="Brady N."/>
            <person name="Bray-Allen S."/>
            <person name="Bridgeman A.M."/>
            <person name="Brown A.J."/>
            <person name="Brown M.J."/>
            <person name="Bonnin D."/>
            <person name="Bruford E.A."/>
            <person name="Buhay C."/>
            <person name="Burch P."/>
            <person name="Burford D."/>
            <person name="Burgess J."/>
            <person name="Burrill W."/>
            <person name="Burton J."/>
            <person name="Bye J.M."/>
            <person name="Carder C."/>
            <person name="Carrel L."/>
            <person name="Chako J."/>
            <person name="Chapman J.C."/>
            <person name="Chavez D."/>
            <person name="Chen E."/>
            <person name="Chen G."/>
            <person name="Chen Y."/>
            <person name="Chen Z."/>
            <person name="Chinault C."/>
            <person name="Ciccodicola A."/>
            <person name="Clark S.Y."/>
            <person name="Clarke G."/>
            <person name="Clee C.M."/>
            <person name="Clegg S."/>
            <person name="Clerc-Blankenburg K."/>
            <person name="Clifford K."/>
            <person name="Cobley V."/>
            <person name="Cole C.G."/>
            <person name="Conquer J.S."/>
            <person name="Corby N."/>
            <person name="Connor R.E."/>
            <person name="David R."/>
            <person name="Davies J."/>
            <person name="Davis C."/>
            <person name="Davis J."/>
            <person name="Delgado O."/>
            <person name="Deshazo D."/>
            <person name="Dhami P."/>
            <person name="Ding Y."/>
            <person name="Dinh H."/>
            <person name="Dodsworth S."/>
            <person name="Draper H."/>
            <person name="Dugan-Rocha S."/>
            <person name="Dunham A."/>
            <person name="Dunn M."/>
            <person name="Durbin K.J."/>
            <person name="Dutta I."/>
            <person name="Eades T."/>
            <person name="Ellwood M."/>
            <person name="Emery-Cohen A."/>
            <person name="Errington H."/>
            <person name="Evans K.L."/>
            <person name="Faulkner L."/>
            <person name="Francis F."/>
            <person name="Frankland J."/>
            <person name="Fraser A.E."/>
            <person name="Galgoczy P."/>
            <person name="Gilbert J."/>
            <person name="Gill R."/>
            <person name="Gloeckner G."/>
            <person name="Gregory S.G."/>
            <person name="Gribble S."/>
            <person name="Griffiths C."/>
            <person name="Grocock R."/>
            <person name="Gu Y."/>
            <person name="Gwilliam R."/>
            <person name="Hamilton C."/>
            <person name="Hart E.A."/>
            <person name="Hawes A."/>
            <person name="Heath P.D."/>
            <person name="Heitmann K."/>
            <person name="Hennig S."/>
            <person name="Hernandez J."/>
            <person name="Hinzmann B."/>
            <person name="Ho S."/>
            <person name="Hoffs M."/>
            <person name="Howden P.J."/>
            <person name="Huckle E.J."/>
            <person name="Hume J."/>
            <person name="Hunt P.J."/>
            <person name="Hunt A.R."/>
            <person name="Isherwood J."/>
            <person name="Jacob L."/>
            <person name="Johnson D."/>
            <person name="Jones S."/>
            <person name="de Jong P.J."/>
            <person name="Joseph S.S."/>
            <person name="Keenan S."/>
            <person name="Kelly S."/>
            <person name="Kershaw J.K."/>
            <person name="Khan Z."/>
            <person name="Kioschis P."/>
            <person name="Klages S."/>
            <person name="Knights A.J."/>
            <person name="Kosiura A."/>
            <person name="Kovar-Smith C."/>
            <person name="Laird G.K."/>
            <person name="Langford C."/>
            <person name="Lawlor S."/>
            <person name="Leversha M."/>
            <person name="Lewis L."/>
            <person name="Liu W."/>
            <person name="Lloyd C."/>
            <person name="Lloyd D.M."/>
            <person name="Loulseged H."/>
            <person name="Loveland J.E."/>
            <person name="Lovell J.D."/>
            <person name="Lozado R."/>
            <person name="Lu J."/>
            <person name="Lyne R."/>
            <person name="Ma J."/>
            <person name="Maheshwari M."/>
            <person name="Matthews L.H."/>
            <person name="McDowall J."/>
            <person name="McLaren S."/>
            <person name="McMurray A."/>
            <person name="Meidl P."/>
            <person name="Meitinger T."/>
            <person name="Milne S."/>
            <person name="Miner G."/>
            <person name="Mistry S.L."/>
            <person name="Morgan M."/>
            <person name="Morris S."/>
            <person name="Mueller I."/>
            <person name="Mullikin J.C."/>
            <person name="Nguyen N."/>
            <person name="Nordsiek G."/>
            <person name="Nyakatura G."/>
            <person name="O'dell C.N."/>
            <person name="Okwuonu G."/>
            <person name="Palmer S."/>
            <person name="Pandian R."/>
            <person name="Parker D."/>
            <person name="Parrish J."/>
            <person name="Pasternak S."/>
            <person name="Patel D."/>
            <person name="Pearce A.V."/>
            <person name="Pearson D.M."/>
            <person name="Pelan S.E."/>
            <person name="Perez L."/>
            <person name="Porter K.M."/>
            <person name="Ramsey Y."/>
            <person name="Reichwald K."/>
            <person name="Rhodes S."/>
            <person name="Ridler K.A."/>
            <person name="Schlessinger D."/>
            <person name="Schueler M.G."/>
            <person name="Sehra H.K."/>
            <person name="Shaw-Smith C."/>
            <person name="Shen H."/>
            <person name="Sheridan E.M."/>
            <person name="Shownkeen R."/>
            <person name="Skuce C.D."/>
            <person name="Smith M.L."/>
            <person name="Sotheran E.C."/>
            <person name="Steingruber H.E."/>
            <person name="Steward C.A."/>
            <person name="Storey R."/>
            <person name="Swann R.M."/>
            <person name="Swarbreck D."/>
            <person name="Tabor P.E."/>
            <person name="Taudien S."/>
            <person name="Taylor T."/>
            <person name="Teague B."/>
            <person name="Thomas K."/>
            <person name="Thorpe A."/>
            <person name="Timms K."/>
            <person name="Tracey A."/>
            <person name="Trevanion S."/>
            <person name="Tromans A.C."/>
            <person name="d'Urso M."/>
            <person name="Verduzco D."/>
            <person name="Villasana D."/>
            <person name="Waldron L."/>
            <person name="Wall M."/>
            <person name="Wang Q."/>
            <person name="Warren J."/>
            <person name="Warry G.L."/>
            <person name="Wei X."/>
            <person name="West A."/>
            <person name="Whitehead S.L."/>
            <person name="Whiteley M.N."/>
            <person name="Wilkinson J.E."/>
            <person name="Willey D.L."/>
            <person name="Williams G."/>
            <person name="Williams L."/>
            <person name="Williamson A."/>
            <person name="Williamson H."/>
            <person name="Wilming L."/>
            <person name="Woodmansey R.L."/>
            <person name="Wray P.W."/>
            <person name="Yen J."/>
            <person name="Zhang J."/>
            <person name="Zhou J."/>
            <person name="Zoghbi H."/>
            <person name="Zorilla S."/>
            <person name="Buck D."/>
            <person name="Reinhardt R."/>
            <person name="Poustka A."/>
            <person name="Rosenthal A."/>
            <person name="Lehrach H."/>
            <person name="Meindl A."/>
            <person name="Minx P.J."/>
            <person name="Hillier L.W."/>
            <person name="Willard H.F."/>
            <person name="Wilson R.K."/>
            <person name="Waterston R.H."/>
            <person name="Rice C.M."/>
            <person name="Vaudin M."/>
            <person name="Coulson A."/>
            <person name="Nelson D.L."/>
            <person name="Weinstock G."/>
            <person name="Sulston J.E."/>
            <person name="Durbin R.M."/>
            <person name="Hubbard T."/>
            <person name="Gibbs R.A."/>
            <person name="Beck S."/>
            <person name="Rogers J."/>
            <person name="Bentley D.R."/>
        </authorList>
    </citation>
    <scope>NUCLEOTIDE SEQUENCE [LARGE SCALE GENOMIC DNA]</scope>
</reference>
<reference key="6">
    <citation type="submission" date="2005-09" db="EMBL/GenBank/DDBJ databases">
        <authorList>
            <person name="Mural R.J."/>
            <person name="Istrail S."/>
            <person name="Sutton G.G."/>
            <person name="Florea L."/>
            <person name="Halpern A.L."/>
            <person name="Mobarry C.M."/>
            <person name="Lippert R."/>
            <person name="Walenz B."/>
            <person name="Shatkay H."/>
            <person name="Dew I."/>
            <person name="Miller J.R."/>
            <person name="Flanigan M.J."/>
            <person name="Edwards N.J."/>
            <person name="Bolanos R."/>
            <person name="Fasulo D."/>
            <person name="Halldorsson B.V."/>
            <person name="Hannenhalli S."/>
            <person name="Turner R."/>
            <person name="Yooseph S."/>
            <person name="Lu F."/>
            <person name="Nusskern D.R."/>
            <person name="Shue B.C."/>
            <person name="Zheng X.H."/>
            <person name="Zhong F."/>
            <person name="Delcher A.L."/>
            <person name="Huson D.H."/>
            <person name="Kravitz S.A."/>
            <person name="Mouchard L."/>
            <person name="Reinert K."/>
            <person name="Remington K.A."/>
            <person name="Clark A.G."/>
            <person name="Waterman M.S."/>
            <person name="Eichler E.E."/>
            <person name="Adams M.D."/>
            <person name="Hunkapiller M.W."/>
            <person name="Myers E.W."/>
            <person name="Venter J.C."/>
        </authorList>
    </citation>
    <scope>NUCLEOTIDE SEQUENCE [LARGE SCALE GENOMIC DNA]</scope>
</reference>
<reference key="7">
    <citation type="journal article" date="2004" name="Genome Res.">
        <title>The status, quality, and expansion of the NIH full-length cDNA project: the Mammalian Gene Collection (MGC).</title>
        <authorList>
            <consortium name="The MGC Project Team"/>
        </authorList>
    </citation>
    <scope>NUCLEOTIDE SEQUENCE [LARGE SCALE MRNA]</scope>
    <source>
        <tissue>Kidney</tissue>
    </source>
</reference>
<reference key="8">
    <citation type="journal article" date="1994" name="Genomics">
        <title>Isolation of expressed sequences encoded by the human Xq terminal portion using microclone probes generated by laser microdissection.</title>
        <authorList>
            <person name="Yokoi H."/>
            <person name="Hadano S."/>
            <person name="Kogi M."/>
            <person name="Kang X."/>
            <person name="Wakasa K."/>
            <person name="Ikeda J."/>
        </authorList>
    </citation>
    <scope>NUCLEOTIDE SEQUENCE [MRNA] OF 97-470</scope>
    <source>
        <tissue>Brain</tissue>
    </source>
</reference>
<reference key="9">
    <citation type="journal article" date="2009" name="J. Proteome Res.">
        <title>Glycoproteomics analysis of human liver tissue by combination of multiple enzyme digestion and hydrazide chemistry.</title>
        <authorList>
            <person name="Chen R."/>
            <person name="Jiang X."/>
            <person name="Sun D."/>
            <person name="Han G."/>
            <person name="Wang F."/>
            <person name="Ye M."/>
            <person name="Wang L."/>
            <person name="Zou H."/>
        </authorList>
    </citation>
    <scope>GLYCOSYLATION [LARGE SCALE ANALYSIS] AT ASN-261 AND ASN-273</scope>
    <source>
        <tissue>Liver</tissue>
    </source>
</reference>
<reference key="10">
    <citation type="journal article" date="2011" name="BMC Syst. Biol.">
        <title>Initial characterization of the human central proteome.</title>
        <authorList>
            <person name="Burkard T.R."/>
            <person name="Planyavsky M."/>
            <person name="Kaupe I."/>
            <person name="Breitwieser F.P."/>
            <person name="Buerckstuemmer T."/>
            <person name="Bennett K.L."/>
            <person name="Superti-Furga G."/>
            <person name="Colinge J."/>
        </authorList>
    </citation>
    <scope>IDENTIFICATION BY MASS SPECTROMETRY [LARGE SCALE ANALYSIS]</scope>
</reference>
<reference key="11">
    <citation type="journal article" date="2013" name="J. Proteome Res.">
        <title>Toward a comprehensive characterization of a human cancer cell phosphoproteome.</title>
        <authorList>
            <person name="Zhou H."/>
            <person name="Di Palma S."/>
            <person name="Preisinger C."/>
            <person name="Peng M."/>
            <person name="Polat A.N."/>
            <person name="Heck A.J."/>
            <person name="Mohammed S."/>
        </authorList>
    </citation>
    <scope>PHOSPHORYLATION [LARGE SCALE ANALYSIS] AT SER-465</scope>
    <scope>IDENTIFICATION BY MASS SPECTROMETRY [LARGE SCALE ANALYSIS]</scope>
    <source>
        <tissue>Erythroleukemia</tissue>
    </source>
</reference>
<reference key="12">
    <citation type="journal article" date="2015" name="Cell Rep.">
        <title>RNASEK Is a V-ATPase-Associated Factor Required for Endocytosis and the Replication of Rhinovirus, Influenza A Virus, and Dengue Virus.</title>
        <authorList>
            <person name="Perreira J.M."/>
            <person name="Aker A.M."/>
            <person name="Savidis G."/>
            <person name="Chin C.R."/>
            <person name="McDougall W.M."/>
            <person name="Portmann J.M."/>
            <person name="Meraner P."/>
            <person name="Smith M.C."/>
            <person name="Rahman M."/>
            <person name="Baker R.E."/>
            <person name="Gauthier A."/>
            <person name="Franti M."/>
            <person name="Brass A.L."/>
        </authorList>
    </citation>
    <scope>INTERACTION WITH RNASEK</scope>
</reference>
<reference key="13">
    <citation type="journal article" date="2016" name="Nat. Commun.">
        <title>ATP6AP1 deficiency causes an immunodeficiency with hepatopathy, cognitive impairment and abnormal protein glycosylation.</title>
        <authorList>
            <person name="Jansen E.J."/>
            <person name="Timal S."/>
            <person name="Ryan M."/>
            <person name="Ashikov A."/>
            <person name="van Scherpenzeel M."/>
            <person name="Graham L.A."/>
            <person name="Mandel H."/>
            <person name="Hoischen A."/>
            <person name="Iancu T.C."/>
            <person name="Raymond K."/>
            <person name="Steenbergen G."/>
            <person name="Gilissen C."/>
            <person name="Huijben K."/>
            <person name="van Bakel N.H."/>
            <person name="Maeda Y."/>
            <person name="Rodenburg R.J."/>
            <person name="Adamowicz M."/>
            <person name="Crushell E."/>
            <person name="Koenen H."/>
            <person name="Adams D."/>
            <person name="Vodopiutz J."/>
            <person name="Greber-Platzer S."/>
            <person name="Mueller T."/>
            <person name="Dueckers G."/>
            <person name="Morava E."/>
            <person name="Sykut-Cegielska J."/>
            <person name="Martens G.J."/>
            <person name="Wevers R.A."/>
            <person name="Niehues T."/>
            <person name="Huynen M.A."/>
            <person name="Veltman J.A."/>
            <person name="Stevens T.H."/>
            <person name="Lefeber D.J."/>
        </authorList>
    </citation>
    <scope>INVOLVEMENT IN IMD47</scope>
    <scope>VARIANTS IMD47 PRO-144; CYS-313; LYS-346 AND ILE-428</scope>
    <scope>CHARACTERIZATION OF VARIANTS IMD47 CYS-313; LYS-346 AND ILE-428</scope>
    <scope>SUBCELLULAR LOCATION</scope>
    <scope>TISSUE SPECIFICITY</scope>
    <scope>GLYCOSYLATION</scope>
    <scope>MUTAGENESIS OF VAL-470</scope>
</reference>
<reference key="14">
    <citation type="journal article" date="2017" name="Elife">
        <title>The vacuolar-ATPase complex and assembly factors, TMEM199 and CCDC115, control HIF1alpha prolyl hydroxylation by regulating cellular iron levels.</title>
        <authorList>
            <person name="Miles A.L."/>
            <person name="Burr S.P."/>
            <person name="Grice G.L."/>
            <person name="Nathan J.A."/>
        </authorList>
    </citation>
    <scope>FUNCTION</scope>
</reference>
<reference key="15">
    <citation type="journal article" date="2017" name="J. Exp. Med.">
        <title>Mutations in the X-linked ATP6AP2 cause a glycosylation disorder with autophagic defects.</title>
        <authorList>
            <person name="Rujano M.A."/>
            <person name="Cannata Serio M."/>
            <person name="Panasyuk G."/>
            <person name="Peanne R."/>
            <person name="Reunert J."/>
            <person name="Rymen D."/>
            <person name="Hauser V."/>
            <person name="Park J.H."/>
            <person name="Freisinger P."/>
            <person name="Souche E."/>
            <person name="Guida M.C."/>
            <person name="Maier E.M."/>
            <person name="Wada Y."/>
            <person name="Jaeger S."/>
            <person name="Krogan N.J."/>
            <person name="Kretz O."/>
            <person name="Nobre S."/>
            <person name="Garcia P."/>
            <person name="Quelhas D."/>
            <person name="Bird T.D."/>
            <person name="Raskind W.H."/>
            <person name="Schwake M."/>
            <person name="Duvet S."/>
            <person name="Foulquier F."/>
            <person name="Matthijs G."/>
            <person name="Marquardt T."/>
            <person name="Simons M."/>
        </authorList>
    </citation>
    <scope>INTERACTION WITH ATP6AP2</scope>
</reference>
<reference key="16">
    <citation type="journal article" date="2017" name="Neuron">
        <title>Loss of TMEM106B ameliorates lysosomal and frontotemporal dementia-related phenotypes in progranulin-deficient mice.</title>
        <authorList>
            <person name="Klein Z.A."/>
            <person name="Takahashi H."/>
            <person name="Ma M."/>
            <person name="Stagi M."/>
            <person name="Zhou M."/>
            <person name="Lam T.T."/>
            <person name="Strittmatter S.M."/>
        </authorList>
    </citation>
    <scope>INTERACTION WITH TMEM106B</scope>
</reference>
<reference evidence="14 15 16 17" key="17">
    <citation type="journal article" date="2020" name="Mol. Cell">
        <title>Structures of a Complete Human V-ATPase Reveal Mechanisms of Its Assembly.</title>
        <authorList>
            <person name="Wang L."/>
            <person name="Wu D."/>
            <person name="Robinson C.V."/>
            <person name="Wu H."/>
            <person name="Fu T.M."/>
        </authorList>
    </citation>
    <scope>STRUCTURE BY ELECTRON MICROSCOPY (3.00 ANGSTROMS)</scope>
    <scope>FUNCTION</scope>
    <scope>IDENTIFICATION IN THE V-ATPASE COMPLEX</scope>
    <scope>GLYCOSYLATION AT ASN-261; ASN-273; ASN-296; ASN-303; ASN-350 AND ASN-357</scope>
    <scope>DISULFIDE BONDS</scope>
</reference>
<evidence type="ECO:0000250" key="1">
    <source>
        <dbReference type="UniProtKB" id="O54715"/>
    </source>
</evidence>
<evidence type="ECO:0000250" key="2">
    <source>
        <dbReference type="UniProtKB" id="Q9R1Q9"/>
    </source>
</evidence>
<evidence type="ECO:0000255" key="3"/>
<evidence type="ECO:0000269" key="4">
    <source>
    </source>
</evidence>
<evidence type="ECO:0000269" key="5">
    <source>
    </source>
</evidence>
<evidence type="ECO:0000269" key="6">
    <source>
    </source>
</evidence>
<evidence type="ECO:0000269" key="7">
    <source>
    </source>
</evidence>
<evidence type="ECO:0000269" key="8">
    <source>
    </source>
</evidence>
<evidence type="ECO:0000269" key="9">
    <source>
    </source>
</evidence>
<evidence type="ECO:0000269" key="10">
    <source>
    </source>
</evidence>
<evidence type="ECO:0000303" key="11">
    <source>
    </source>
</evidence>
<evidence type="ECO:0000305" key="12"/>
<evidence type="ECO:0000305" key="13">
    <source>
    </source>
</evidence>
<evidence type="ECO:0007744" key="14">
    <source>
        <dbReference type="PDB" id="6WLW"/>
    </source>
</evidence>
<evidence type="ECO:0007744" key="15">
    <source>
        <dbReference type="PDB" id="6WM2"/>
    </source>
</evidence>
<evidence type="ECO:0007744" key="16">
    <source>
        <dbReference type="PDB" id="6WM3"/>
    </source>
</evidence>
<evidence type="ECO:0007744" key="17">
    <source>
        <dbReference type="PDB" id="6WM4"/>
    </source>
</evidence>
<evidence type="ECO:0007744" key="18">
    <source>
    </source>
</evidence>
<evidence type="ECO:0007829" key="19">
    <source>
        <dbReference type="PDB" id="6WLW"/>
    </source>
</evidence>
<name>VAS1_HUMAN</name>